<keyword id="KW-1003">Cell membrane</keyword>
<keyword id="KW-0472">Membrane</keyword>
<keyword id="KW-0520">NAD</keyword>
<keyword id="KW-0874">Quinone</keyword>
<keyword id="KW-1185">Reference proteome</keyword>
<keyword id="KW-1278">Translocase</keyword>
<keyword id="KW-0812">Transmembrane</keyword>
<keyword id="KW-1133">Transmembrane helix</keyword>
<name>NUOJ_RICPR</name>
<sequence length="205" mass="23142">MPIFFYLFTTLIIISSLCVVLSKNSVYSVLWLIFTFINGSGLMILLGAEFLAMLLIVIYVGAVAVLFLFVIMMLDINFNQAITKLRENLSLSIFITLIMFADLVITIILSTKNINYSSNISFAIANNISNTKAIGNVLYTEFMLPFQIAGLILFVAMISCITLTLKKRDRIKHQDIRKQLSHNKSNVILMTKPILNKGVENIKYE</sequence>
<reference key="1">
    <citation type="journal article" date="1998" name="Nature">
        <title>The genome sequence of Rickettsia prowazekii and the origin of mitochondria.</title>
        <authorList>
            <person name="Andersson S.G.E."/>
            <person name="Zomorodipour A."/>
            <person name="Andersson J.O."/>
            <person name="Sicheritz-Ponten T."/>
            <person name="Alsmark U.C.M."/>
            <person name="Podowski R.M."/>
            <person name="Naeslund A.K."/>
            <person name="Eriksson A.-S."/>
            <person name="Winkler H.H."/>
            <person name="Kurland C.G."/>
        </authorList>
    </citation>
    <scope>NUCLEOTIDE SEQUENCE [LARGE SCALE GENOMIC DNA]</scope>
    <source>
        <strain>Madrid E</strain>
    </source>
</reference>
<feature type="chain" id="PRO_0000118379" description="NADH-quinone oxidoreductase subunit J">
    <location>
        <begin position="1"/>
        <end position="205"/>
    </location>
</feature>
<feature type="transmembrane region" description="Helical" evidence="2">
    <location>
        <begin position="1"/>
        <end position="21"/>
    </location>
</feature>
<feature type="transmembrane region" description="Helical" evidence="2">
    <location>
        <begin position="26"/>
        <end position="46"/>
    </location>
</feature>
<feature type="transmembrane region" description="Helical" evidence="2">
    <location>
        <begin position="54"/>
        <end position="74"/>
    </location>
</feature>
<feature type="transmembrane region" description="Helical" evidence="2">
    <location>
        <begin position="89"/>
        <end position="109"/>
    </location>
</feature>
<feature type="transmembrane region" description="Helical" evidence="2">
    <location>
        <begin position="142"/>
        <end position="162"/>
    </location>
</feature>
<protein>
    <recommendedName>
        <fullName>NADH-quinone oxidoreductase subunit J</fullName>
        <ecNumber>7.1.1.-</ecNumber>
    </recommendedName>
    <alternativeName>
        <fullName>NADH dehydrogenase I subunit J</fullName>
    </alternativeName>
    <alternativeName>
        <fullName>NDH-1 subunit J</fullName>
    </alternativeName>
</protein>
<accession>Q9ZCG3</accession>
<organism>
    <name type="scientific">Rickettsia prowazekii (strain Madrid E)</name>
    <dbReference type="NCBI Taxonomy" id="272947"/>
    <lineage>
        <taxon>Bacteria</taxon>
        <taxon>Pseudomonadati</taxon>
        <taxon>Pseudomonadota</taxon>
        <taxon>Alphaproteobacteria</taxon>
        <taxon>Rickettsiales</taxon>
        <taxon>Rickettsiaceae</taxon>
        <taxon>Rickettsieae</taxon>
        <taxon>Rickettsia</taxon>
        <taxon>typhus group</taxon>
    </lineage>
</organism>
<evidence type="ECO:0000250" key="1"/>
<evidence type="ECO:0000255" key="2"/>
<evidence type="ECO:0000305" key="3"/>
<gene>
    <name type="primary">nuoJ</name>
    <name type="ordered locus">RP790</name>
</gene>
<dbReference type="EC" id="7.1.1.-"/>
<dbReference type="EMBL" id="AJ235273">
    <property type="protein sequence ID" value="CAA15216.1"/>
    <property type="molecule type" value="Genomic_DNA"/>
</dbReference>
<dbReference type="PIR" id="H71639">
    <property type="entry name" value="H71639"/>
</dbReference>
<dbReference type="RefSeq" id="NP_221140.1">
    <property type="nucleotide sequence ID" value="NC_000963.1"/>
</dbReference>
<dbReference type="RefSeq" id="WP_004596926.1">
    <property type="nucleotide sequence ID" value="NC_000963.1"/>
</dbReference>
<dbReference type="SMR" id="Q9ZCG3"/>
<dbReference type="STRING" id="272947.gene:17555859"/>
<dbReference type="EnsemblBacteria" id="CAA15216">
    <property type="protein sequence ID" value="CAA15216"/>
    <property type="gene ID" value="CAA15216"/>
</dbReference>
<dbReference type="KEGG" id="rpr:RP790"/>
<dbReference type="PATRIC" id="fig|272947.5.peg.826"/>
<dbReference type="eggNOG" id="COG0839">
    <property type="taxonomic scope" value="Bacteria"/>
</dbReference>
<dbReference type="HOGENOM" id="CLU_085957_5_1_5"/>
<dbReference type="OrthoDB" id="9795409at2"/>
<dbReference type="Proteomes" id="UP000002480">
    <property type="component" value="Chromosome"/>
</dbReference>
<dbReference type="GO" id="GO:0005886">
    <property type="term" value="C:plasma membrane"/>
    <property type="evidence" value="ECO:0007669"/>
    <property type="project" value="UniProtKB-SubCell"/>
</dbReference>
<dbReference type="GO" id="GO:0008137">
    <property type="term" value="F:NADH dehydrogenase (ubiquinone) activity"/>
    <property type="evidence" value="ECO:0007669"/>
    <property type="project" value="InterPro"/>
</dbReference>
<dbReference type="GO" id="GO:0048038">
    <property type="term" value="F:quinone binding"/>
    <property type="evidence" value="ECO:0007669"/>
    <property type="project" value="UniProtKB-KW"/>
</dbReference>
<dbReference type="Gene3D" id="1.20.120.1200">
    <property type="entry name" value="NADH-ubiquinone/plastoquinone oxidoreductase chain 6, subunit NuoJ"/>
    <property type="match status" value="1"/>
</dbReference>
<dbReference type="InterPro" id="IPR001457">
    <property type="entry name" value="NADH_UbQ/plastoQ_OxRdtase_su6"/>
</dbReference>
<dbReference type="InterPro" id="IPR042106">
    <property type="entry name" value="Nuo/plastoQ_OxRdtase_6_NuoJ"/>
</dbReference>
<dbReference type="NCBIfam" id="NF005164">
    <property type="entry name" value="PRK06638.1-4"/>
    <property type="match status" value="1"/>
</dbReference>
<dbReference type="PANTHER" id="PTHR33269">
    <property type="entry name" value="NADH-UBIQUINONE OXIDOREDUCTASE CHAIN 6"/>
    <property type="match status" value="1"/>
</dbReference>
<dbReference type="PANTHER" id="PTHR33269:SF17">
    <property type="entry name" value="NADH-UBIQUINONE OXIDOREDUCTASE CHAIN 6"/>
    <property type="match status" value="1"/>
</dbReference>
<dbReference type="Pfam" id="PF00499">
    <property type="entry name" value="Oxidored_q3"/>
    <property type="match status" value="1"/>
</dbReference>
<proteinExistence type="inferred from homology"/>
<comment type="function">
    <text evidence="1">NDH-1 shuttles electrons from NADH, via FMN and iron-sulfur (Fe-S) centers, to quinones in the respiratory chain. Couples the redox reaction to proton translocation (for every two electrons transferred, four hydrogen ions are translocated across the cytoplasmic membrane), and thus conserves the redox energy in a proton gradient (By similarity).</text>
</comment>
<comment type="catalytic activity">
    <reaction>
        <text>a quinone + NADH + 5 H(+)(in) = a quinol + NAD(+) + 4 H(+)(out)</text>
        <dbReference type="Rhea" id="RHEA:57888"/>
        <dbReference type="ChEBI" id="CHEBI:15378"/>
        <dbReference type="ChEBI" id="CHEBI:24646"/>
        <dbReference type="ChEBI" id="CHEBI:57540"/>
        <dbReference type="ChEBI" id="CHEBI:57945"/>
        <dbReference type="ChEBI" id="CHEBI:132124"/>
    </reaction>
</comment>
<comment type="subcellular location">
    <subcellularLocation>
        <location>Cell membrane</location>
        <topology>Multi-pass membrane protein</topology>
    </subcellularLocation>
</comment>
<comment type="similarity">
    <text evidence="3">Belongs to the complex I subunit 6 family.</text>
</comment>